<gene>
    <name type="primary">TAS2R31</name>
    <name type="synonym">TAS2R44</name>
</gene>
<comment type="function">
    <text evidence="1">Receptor that may play a role in the perception of bitterness and is gustducin-linked. May play a role in sensing the chemical composition of the gastrointestinal content. The activity of this receptor may stimulate alpha gustducin, mediate PLC-beta-2 activation and lead to the gating of TRPM5 (By similarity).</text>
</comment>
<comment type="subcellular location">
    <subcellularLocation>
        <location>Membrane</location>
        <topology>Multi-pass membrane protein</topology>
    </subcellularLocation>
</comment>
<comment type="miscellaneous">
    <text>Most taste cells may be activated by a limited number of bitter compounds; individual taste cells can discriminate among bitter stimuli.</text>
</comment>
<comment type="similarity">
    <text evidence="3">Belongs to the G-protein coupled receptor T2R family.</text>
</comment>
<accession>Q645V3</accession>
<dbReference type="EMBL" id="AY724974">
    <property type="protein sequence ID" value="AAU21166.1"/>
    <property type="molecule type" value="Genomic_DNA"/>
</dbReference>
<dbReference type="SMR" id="Q645V3"/>
<dbReference type="GlyCosmos" id="Q645V3">
    <property type="glycosylation" value="1 site, No reported glycans"/>
</dbReference>
<dbReference type="GO" id="GO:0005886">
    <property type="term" value="C:plasma membrane"/>
    <property type="evidence" value="ECO:0007669"/>
    <property type="project" value="UniProtKB-ARBA"/>
</dbReference>
<dbReference type="GO" id="GO:0033038">
    <property type="term" value="F:bitter taste receptor activity"/>
    <property type="evidence" value="ECO:0007669"/>
    <property type="project" value="InterPro"/>
</dbReference>
<dbReference type="GO" id="GO:0004930">
    <property type="term" value="F:G protein-coupled receptor activity"/>
    <property type="evidence" value="ECO:0007669"/>
    <property type="project" value="UniProtKB-KW"/>
</dbReference>
<dbReference type="CDD" id="cd15027">
    <property type="entry name" value="7tm_TAS2R43-like"/>
    <property type="match status" value="1"/>
</dbReference>
<dbReference type="FunFam" id="1.20.1070.10:FF:000042">
    <property type="entry name" value="Taste receptor type 2 member 7"/>
    <property type="match status" value="1"/>
</dbReference>
<dbReference type="Gene3D" id="1.20.1070.10">
    <property type="entry name" value="Rhodopsin 7-helix transmembrane proteins"/>
    <property type="match status" value="1"/>
</dbReference>
<dbReference type="InterPro" id="IPR007960">
    <property type="entry name" value="TAS2R"/>
</dbReference>
<dbReference type="PANTHER" id="PTHR11394">
    <property type="entry name" value="TASTE RECEPTOR TYPE 2"/>
    <property type="match status" value="1"/>
</dbReference>
<dbReference type="PANTHER" id="PTHR11394:SF129">
    <property type="entry name" value="TASTE RECEPTOR TYPE 2 MEMBER 31"/>
    <property type="match status" value="1"/>
</dbReference>
<dbReference type="Pfam" id="PF05296">
    <property type="entry name" value="TAS2R"/>
    <property type="match status" value="1"/>
</dbReference>
<dbReference type="SUPFAM" id="SSF81321">
    <property type="entry name" value="Family A G protein-coupled receptor-like"/>
    <property type="match status" value="1"/>
</dbReference>
<sequence length="309" mass="35338">MITFLPTIFSILVVVIFVIGNFGNGFIALVNSIEWVKRQKISFADQILTALAVSRVGLLWALLLNWYSTVFNPAFYSVGVRTTVYDVWTVTGHFSNWLATSLSIFYLLKIANFSNLIFLHLKRRVKSVILVMLLGPLLFLACQLFVINMKEILRTKEYEGNMTWKIKLRSAMYLSDATITTLANLVPFTLTLLSFLLLICSLCKHLNKMQLHGKGSQDPSTKVHIKVLQTVISFLLLCAIYFLSIMISVWSFGSLENKPVFMFCKAIRFSYPSIHPFILIWGNKKLKQTFLSVLRQVRYWVKGEKPSSP</sequence>
<evidence type="ECO:0000250" key="1"/>
<evidence type="ECO:0000255" key="2"/>
<evidence type="ECO:0000305" key="3"/>
<keyword id="KW-0297">G-protein coupled receptor</keyword>
<keyword id="KW-0325">Glycoprotein</keyword>
<keyword id="KW-0472">Membrane</keyword>
<keyword id="KW-0675">Receptor</keyword>
<keyword id="KW-0716">Sensory transduction</keyword>
<keyword id="KW-0919">Taste</keyword>
<keyword id="KW-0807">Transducer</keyword>
<keyword id="KW-0812">Transmembrane</keyword>
<keyword id="KW-1133">Transmembrane helix</keyword>
<feature type="chain" id="PRO_0000082313" description="Taste receptor type 2 member 31">
    <location>
        <begin position="1"/>
        <end position="309"/>
    </location>
</feature>
<feature type="topological domain" description="Extracellular" evidence="2">
    <location>
        <begin position="1"/>
        <end position="2"/>
    </location>
</feature>
<feature type="transmembrane region" description="Helical; Name=1" evidence="2">
    <location>
        <begin position="3"/>
        <end position="23"/>
    </location>
</feature>
<feature type="topological domain" description="Cytoplasmic" evidence="2">
    <location>
        <begin position="24"/>
        <end position="55"/>
    </location>
</feature>
<feature type="transmembrane region" description="Helical; Name=2" evidence="2">
    <location>
        <begin position="56"/>
        <end position="76"/>
    </location>
</feature>
<feature type="topological domain" description="Extracellular" evidence="2">
    <location>
        <begin position="77"/>
        <end position="100"/>
    </location>
</feature>
<feature type="transmembrane region" description="Helical; Name=3" evidence="2">
    <location>
        <begin position="101"/>
        <end position="121"/>
    </location>
</feature>
<feature type="topological domain" description="Cytoplasmic" evidence="2">
    <location>
        <begin position="122"/>
        <end position="126"/>
    </location>
</feature>
<feature type="transmembrane region" description="Helical; Name=4" evidence="2">
    <location>
        <begin position="127"/>
        <end position="147"/>
    </location>
</feature>
<feature type="topological domain" description="Extracellular" evidence="2">
    <location>
        <begin position="148"/>
        <end position="181"/>
    </location>
</feature>
<feature type="transmembrane region" description="Helical; Name=5" evidence="2">
    <location>
        <begin position="182"/>
        <end position="202"/>
    </location>
</feature>
<feature type="topological domain" description="Cytoplasmic" evidence="2">
    <location>
        <begin position="203"/>
        <end position="229"/>
    </location>
</feature>
<feature type="transmembrane region" description="Helical; Name=6" evidence="2">
    <location>
        <begin position="230"/>
        <end position="250"/>
    </location>
</feature>
<feature type="topological domain" description="Extracellular" evidence="2">
    <location>
        <begin position="251"/>
        <end position="259"/>
    </location>
</feature>
<feature type="transmembrane region" description="Helical; Name=7" evidence="2">
    <location>
        <begin position="260"/>
        <end position="280"/>
    </location>
</feature>
<feature type="topological domain" description="Cytoplasmic" evidence="2">
    <location>
        <begin position="281"/>
        <end position="309"/>
    </location>
</feature>
<feature type="glycosylation site" description="N-linked (GlcNAc...) asparagine" evidence="2">
    <location>
        <position position="161"/>
    </location>
</feature>
<name>T2R31_PONPY</name>
<protein>
    <recommendedName>
        <fullName>Taste receptor type 2 member 31</fullName>
        <shortName>T2R31</shortName>
    </recommendedName>
    <alternativeName>
        <fullName>Taste receptor type 2 member 44</fullName>
        <shortName>T2R44</shortName>
    </alternativeName>
</protein>
<reference key="1">
    <citation type="journal article" date="2005" name="Mol. Biol. Evol.">
        <title>Evolution of bitter taste receptors in humans and apes.</title>
        <authorList>
            <person name="Fischer A."/>
            <person name="Gilad Y."/>
            <person name="Man O."/>
            <person name="Paeaebo S."/>
        </authorList>
    </citation>
    <scope>NUCLEOTIDE SEQUENCE [GENOMIC DNA]</scope>
</reference>
<organism>
    <name type="scientific">Pongo pygmaeus</name>
    <name type="common">Bornean orangutan</name>
    <dbReference type="NCBI Taxonomy" id="9600"/>
    <lineage>
        <taxon>Eukaryota</taxon>
        <taxon>Metazoa</taxon>
        <taxon>Chordata</taxon>
        <taxon>Craniata</taxon>
        <taxon>Vertebrata</taxon>
        <taxon>Euteleostomi</taxon>
        <taxon>Mammalia</taxon>
        <taxon>Eutheria</taxon>
        <taxon>Euarchontoglires</taxon>
        <taxon>Primates</taxon>
        <taxon>Haplorrhini</taxon>
        <taxon>Catarrhini</taxon>
        <taxon>Hominidae</taxon>
        <taxon>Pongo</taxon>
    </lineage>
</organism>
<proteinExistence type="inferred from homology"/>